<reference key="1">
    <citation type="journal article" date="2005" name="J. Bacteriol.">
        <title>Whole-genome sequencing of Staphylococcus haemolyticus uncovers the extreme plasticity of its genome and the evolution of human-colonizing staphylococcal species.</title>
        <authorList>
            <person name="Takeuchi F."/>
            <person name="Watanabe S."/>
            <person name="Baba T."/>
            <person name="Yuzawa H."/>
            <person name="Ito T."/>
            <person name="Morimoto Y."/>
            <person name="Kuroda M."/>
            <person name="Cui L."/>
            <person name="Takahashi M."/>
            <person name="Ankai A."/>
            <person name="Baba S."/>
            <person name="Fukui S."/>
            <person name="Lee J.C."/>
            <person name="Hiramatsu K."/>
        </authorList>
    </citation>
    <scope>NUCLEOTIDE SEQUENCE [LARGE SCALE GENOMIC DNA]</scope>
    <source>
        <strain>JCSC1435</strain>
    </source>
</reference>
<gene>
    <name evidence="1" type="primary">aroE</name>
    <name type="ordered locus">SH1319</name>
</gene>
<sequence>MKYAVIGDPVSHSLSPVMHQVNFKSLNMEDTYEALHIPTQDFHDIRHIIEDNHINGFNVTIPHKERIIPYLDEINDQAKAVGAVNTVKIINNKWIGYNTDGIGYVMGLKQVYPDLENAYVLILGAGGASKGIANELSKIVQPKLTIANRTMSRFETWDMDINAISLEQSEQYLDEFDIIINTTSAGLNNNDDIVISLDNLSSSTLVSDIIYIPYKTKFLKEAEFKGNTVYNGLDMFINQGAESFKIWTGKQPNILEMKYAVLNKLKGV</sequence>
<keyword id="KW-0028">Amino-acid biosynthesis</keyword>
<keyword id="KW-0057">Aromatic amino acid biosynthesis</keyword>
<keyword id="KW-0521">NADP</keyword>
<keyword id="KW-0560">Oxidoreductase</keyword>
<proteinExistence type="inferred from homology"/>
<protein>
    <recommendedName>
        <fullName evidence="1">Shikimate dehydrogenase (NADP(+))</fullName>
        <shortName evidence="1">SDH</shortName>
        <ecNumber evidence="1">1.1.1.25</ecNumber>
    </recommendedName>
</protein>
<dbReference type="EC" id="1.1.1.25" evidence="1"/>
<dbReference type="EMBL" id="AP006716">
    <property type="protein sequence ID" value="BAE04628.1"/>
    <property type="molecule type" value="Genomic_DNA"/>
</dbReference>
<dbReference type="RefSeq" id="WP_011275617.1">
    <property type="nucleotide sequence ID" value="NC_007168.1"/>
</dbReference>
<dbReference type="SMR" id="Q4L6U7"/>
<dbReference type="GeneID" id="93780721"/>
<dbReference type="KEGG" id="sha:SH1319"/>
<dbReference type="eggNOG" id="COG0169">
    <property type="taxonomic scope" value="Bacteria"/>
</dbReference>
<dbReference type="HOGENOM" id="CLU_044063_4_1_9"/>
<dbReference type="OrthoDB" id="9792692at2"/>
<dbReference type="UniPathway" id="UPA00053">
    <property type="reaction ID" value="UER00087"/>
</dbReference>
<dbReference type="Proteomes" id="UP000000543">
    <property type="component" value="Chromosome"/>
</dbReference>
<dbReference type="GO" id="GO:0005829">
    <property type="term" value="C:cytosol"/>
    <property type="evidence" value="ECO:0007669"/>
    <property type="project" value="TreeGrafter"/>
</dbReference>
<dbReference type="GO" id="GO:0050661">
    <property type="term" value="F:NADP binding"/>
    <property type="evidence" value="ECO:0007669"/>
    <property type="project" value="InterPro"/>
</dbReference>
<dbReference type="GO" id="GO:0004764">
    <property type="term" value="F:shikimate 3-dehydrogenase (NADP+) activity"/>
    <property type="evidence" value="ECO:0007669"/>
    <property type="project" value="UniProtKB-UniRule"/>
</dbReference>
<dbReference type="GO" id="GO:0008652">
    <property type="term" value="P:amino acid biosynthetic process"/>
    <property type="evidence" value="ECO:0007669"/>
    <property type="project" value="UniProtKB-KW"/>
</dbReference>
<dbReference type="GO" id="GO:0009073">
    <property type="term" value="P:aromatic amino acid family biosynthetic process"/>
    <property type="evidence" value="ECO:0007669"/>
    <property type="project" value="UniProtKB-KW"/>
</dbReference>
<dbReference type="GO" id="GO:0009423">
    <property type="term" value="P:chorismate biosynthetic process"/>
    <property type="evidence" value="ECO:0007669"/>
    <property type="project" value="UniProtKB-UniRule"/>
</dbReference>
<dbReference type="GO" id="GO:0019632">
    <property type="term" value="P:shikimate metabolic process"/>
    <property type="evidence" value="ECO:0007669"/>
    <property type="project" value="InterPro"/>
</dbReference>
<dbReference type="CDD" id="cd01065">
    <property type="entry name" value="NAD_bind_Shikimate_DH"/>
    <property type="match status" value="1"/>
</dbReference>
<dbReference type="FunFam" id="3.40.50.10860:FF:000016">
    <property type="entry name" value="Shikimate dehydrogenase (NADP(+))"/>
    <property type="match status" value="1"/>
</dbReference>
<dbReference type="Gene3D" id="3.40.50.10860">
    <property type="entry name" value="Leucine Dehydrogenase, chain A, domain 1"/>
    <property type="match status" value="1"/>
</dbReference>
<dbReference type="Gene3D" id="3.40.50.720">
    <property type="entry name" value="NAD(P)-binding Rossmann-like Domain"/>
    <property type="match status" value="1"/>
</dbReference>
<dbReference type="HAMAP" id="MF_00222">
    <property type="entry name" value="Shikimate_DH_AroE"/>
    <property type="match status" value="1"/>
</dbReference>
<dbReference type="InterPro" id="IPR046346">
    <property type="entry name" value="Aminoacid_DH-like_N_sf"/>
</dbReference>
<dbReference type="InterPro" id="IPR036291">
    <property type="entry name" value="NAD(P)-bd_dom_sf"/>
</dbReference>
<dbReference type="InterPro" id="IPR041121">
    <property type="entry name" value="SDH_C"/>
</dbReference>
<dbReference type="InterPro" id="IPR011342">
    <property type="entry name" value="Shikimate_DH"/>
</dbReference>
<dbReference type="InterPro" id="IPR013708">
    <property type="entry name" value="Shikimate_DH-bd_N"/>
</dbReference>
<dbReference type="InterPro" id="IPR022893">
    <property type="entry name" value="Shikimate_DH_fam"/>
</dbReference>
<dbReference type="InterPro" id="IPR006151">
    <property type="entry name" value="Shikm_DH/Glu-tRNA_Rdtase"/>
</dbReference>
<dbReference type="NCBIfam" id="TIGR00507">
    <property type="entry name" value="aroE"/>
    <property type="match status" value="1"/>
</dbReference>
<dbReference type="PANTHER" id="PTHR21089:SF1">
    <property type="entry name" value="BIFUNCTIONAL 3-DEHYDROQUINATE DEHYDRATASE_SHIKIMATE DEHYDROGENASE, CHLOROPLASTIC"/>
    <property type="match status" value="1"/>
</dbReference>
<dbReference type="PANTHER" id="PTHR21089">
    <property type="entry name" value="SHIKIMATE DEHYDROGENASE"/>
    <property type="match status" value="1"/>
</dbReference>
<dbReference type="Pfam" id="PF18317">
    <property type="entry name" value="SDH_C"/>
    <property type="match status" value="1"/>
</dbReference>
<dbReference type="Pfam" id="PF01488">
    <property type="entry name" value="Shikimate_DH"/>
    <property type="match status" value="1"/>
</dbReference>
<dbReference type="Pfam" id="PF08501">
    <property type="entry name" value="Shikimate_dh_N"/>
    <property type="match status" value="1"/>
</dbReference>
<dbReference type="SUPFAM" id="SSF53223">
    <property type="entry name" value="Aminoacid dehydrogenase-like, N-terminal domain"/>
    <property type="match status" value="1"/>
</dbReference>
<dbReference type="SUPFAM" id="SSF51735">
    <property type="entry name" value="NAD(P)-binding Rossmann-fold domains"/>
    <property type="match status" value="1"/>
</dbReference>
<organism>
    <name type="scientific">Staphylococcus haemolyticus (strain JCSC1435)</name>
    <dbReference type="NCBI Taxonomy" id="279808"/>
    <lineage>
        <taxon>Bacteria</taxon>
        <taxon>Bacillati</taxon>
        <taxon>Bacillota</taxon>
        <taxon>Bacilli</taxon>
        <taxon>Bacillales</taxon>
        <taxon>Staphylococcaceae</taxon>
        <taxon>Staphylococcus</taxon>
    </lineage>
</organism>
<feature type="chain" id="PRO_1000021342" description="Shikimate dehydrogenase (NADP(+))">
    <location>
        <begin position="1"/>
        <end position="268"/>
    </location>
</feature>
<feature type="active site" description="Proton acceptor" evidence="1">
    <location>
        <position position="64"/>
    </location>
</feature>
<feature type="binding site" evidence="1">
    <location>
        <begin position="13"/>
        <end position="15"/>
    </location>
    <ligand>
        <name>shikimate</name>
        <dbReference type="ChEBI" id="CHEBI:36208"/>
    </ligand>
</feature>
<feature type="binding site" evidence="1">
    <location>
        <position position="60"/>
    </location>
    <ligand>
        <name>shikimate</name>
        <dbReference type="ChEBI" id="CHEBI:36208"/>
    </ligand>
</feature>
<feature type="binding site" evidence="1">
    <location>
        <position position="76"/>
    </location>
    <ligand>
        <name>NADP(+)</name>
        <dbReference type="ChEBI" id="CHEBI:58349"/>
    </ligand>
</feature>
<feature type="binding site" evidence="1">
    <location>
        <position position="85"/>
    </location>
    <ligand>
        <name>shikimate</name>
        <dbReference type="ChEBI" id="CHEBI:36208"/>
    </ligand>
</feature>
<feature type="binding site" evidence="1">
    <location>
        <position position="100"/>
    </location>
    <ligand>
        <name>shikimate</name>
        <dbReference type="ChEBI" id="CHEBI:36208"/>
    </ligand>
</feature>
<feature type="binding site" evidence="1">
    <location>
        <begin position="124"/>
        <end position="128"/>
    </location>
    <ligand>
        <name>NADP(+)</name>
        <dbReference type="ChEBI" id="CHEBI:58349"/>
    </ligand>
</feature>
<feature type="binding site" evidence="1">
    <location>
        <begin position="148"/>
        <end position="153"/>
    </location>
    <ligand>
        <name>NADP(+)</name>
        <dbReference type="ChEBI" id="CHEBI:58349"/>
    </ligand>
</feature>
<feature type="binding site" evidence="1">
    <location>
        <position position="209"/>
    </location>
    <ligand>
        <name>NADP(+)</name>
        <dbReference type="ChEBI" id="CHEBI:58349"/>
    </ligand>
</feature>
<feature type="binding site" evidence="1">
    <location>
        <position position="211"/>
    </location>
    <ligand>
        <name>shikimate</name>
        <dbReference type="ChEBI" id="CHEBI:36208"/>
    </ligand>
</feature>
<feature type="binding site" evidence="1">
    <location>
        <position position="232"/>
    </location>
    <ligand>
        <name>NADP(+)</name>
        <dbReference type="ChEBI" id="CHEBI:58349"/>
    </ligand>
</feature>
<name>AROE_STAHJ</name>
<evidence type="ECO:0000255" key="1">
    <source>
        <dbReference type="HAMAP-Rule" id="MF_00222"/>
    </source>
</evidence>
<comment type="function">
    <text evidence="1">Involved in the biosynthesis of the chorismate, which leads to the biosynthesis of aromatic amino acids. Catalyzes the reversible NADPH linked reduction of 3-dehydroshikimate (DHSA) to yield shikimate (SA).</text>
</comment>
<comment type="catalytic activity">
    <reaction evidence="1">
        <text>shikimate + NADP(+) = 3-dehydroshikimate + NADPH + H(+)</text>
        <dbReference type="Rhea" id="RHEA:17737"/>
        <dbReference type="ChEBI" id="CHEBI:15378"/>
        <dbReference type="ChEBI" id="CHEBI:16630"/>
        <dbReference type="ChEBI" id="CHEBI:36208"/>
        <dbReference type="ChEBI" id="CHEBI:57783"/>
        <dbReference type="ChEBI" id="CHEBI:58349"/>
        <dbReference type="EC" id="1.1.1.25"/>
    </reaction>
</comment>
<comment type="pathway">
    <text evidence="1">Metabolic intermediate biosynthesis; chorismate biosynthesis; chorismate from D-erythrose 4-phosphate and phosphoenolpyruvate: step 4/7.</text>
</comment>
<comment type="subunit">
    <text evidence="1">Homodimer.</text>
</comment>
<comment type="similarity">
    <text evidence="1">Belongs to the shikimate dehydrogenase family.</text>
</comment>
<accession>Q4L6U7</accession>